<reference key="1">
    <citation type="submission" date="2006-08" db="EMBL/GenBank/DDBJ databases">
        <title>Complete sequence of Alkalilimnicola ehrilichei MLHE-1.</title>
        <authorList>
            <person name="Copeland A."/>
            <person name="Lucas S."/>
            <person name="Lapidus A."/>
            <person name="Barry K."/>
            <person name="Detter J.C."/>
            <person name="Glavina del Rio T."/>
            <person name="Hammon N."/>
            <person name="Israni S."/>
            <person name="Dalin E."/>
            <person name="Tice H."/>
            <person name="Pitluck S."/>
            <person name="Sims D."/>
            <person name="Brettin T."/>
            <person name="Bruce D."/>
            <person name="Han C."/>
            <person name="Tapia R."/>
            <person name="Gilna P."/>
            <person name="Schmutz J."/>
            <person name="Larimer F."/>
            <person name="Land M."/>
            <person name="Hauser L."/>
            <person name="Kyrpides N."/>
            <person name="Mikhailova N."/>
            <person name="Oremland R.S."/>
            <person name="Hoeft S.E."/>
            <person name="Switzer-Blum J."/>
            <person name="Kulp T."/>
            <person name="King G."/>
            <person name="Tabita R."/>
            <person name="Witte B."/>
            <person name="Santini J.M."/>
            <person name="Basu P."/>
            <person name="Hollibaugh J.T."/>
            <person name="Xie G."/>
            <person name="Stolz J.F."/>
            <person name="Richardson P."/>
        </authorList>
    </citation>
    <scope>NUCLEOTIDE SEQUENCE [LARGE SCALE GENOMIC DNA]</scope>
    <source>
        <strain>ATCC BAA-1101 / DSM 17681 / MLHE-1</strain>
    </source>
</reference>
<feature type="chain" id="PRO_1000000064" description="Ribosome-binding factor A">
    <location>
        <begin position="1"/>
        <end position="130"/>
    </location>
</feature>
<proteinExistence type="inferred from homology"/>
<sequence length="130" mass="14884">MPRDFPRTRRVGEQIQRELAELIRDELRDPRLGMVTVSEVTVSRDLAHAKVFVTALGGSDEDNAKTVEVLTRAAGYLRKLLGQRLRIRQVPALHFQHDTAFDRGDRLSRLIDEAVEEDRQQHDDDKPDNG</sequence>
<gene>
    <name evidence="1" type="primary">rbfA</name>
    <name type="ordered locus">Mlg_1947</name>
</gene>
<protein>
    <recommendedName>
        <fullName evidence="1">Ribosome-binding factor A</fullName>
    </recommendedName>
</protein>
<name>RBFA_ALKEH</name>
<dbReference type="EMBL" id="CP000453">
    <property type="protein sequence ID" value="ABI57289.1"/>
    <property type="molecule type" value="Genomic_DNA"/>
</dbReference>
<dbReference type="RefSeq" id="WP_011629683.1">
    <property type="nucleotide sequence ID" value="NC_008340.1"/>
</dbReference>
<dbReference type="SMR" id="Q0A798"/>
<dbReference type="KEGG" id="aeh:Mlg_1947"/>
<dbReference type="eggNOG" id="COG0858">
    <property type="taxonomic scope" value="Bacteria"/>
</dbReference>
<dbReference type="HOGENOM" id="CLU_089475_5_0_6"/>
<dbReference type="OrthoDB" id="307788at2"/>
<dbReference type="Proteomes" id="UP000001962">
    <property type="component" value="Chromosome"/>
</dbReference>
<dbReference type="GO" id="GO:0005829">
    <property type="term" value="C:cytosol"/>
    <property type="evidence" value="ECO:0007669"/>
    <property type="project" value="TreeGrafter"/>
</dbReference>
<dbReference type="GO" id="GO:0043024">
    <property type="term" value="F:ribosomal small subunit binding"/>
    <property type="evidence" value="ECO:0007669"/>
    <property type="project" value="TreeGrafter"/>
</dbReference>
<dbReference type="GO" id="GO:0030490">
    <property type="term" value="P:maturation of SSU-rRNA"/>
    <property type="evidence" value="ECO:0007669"/>
    <property type="project" value="UniProtKB-UniRule"/>
</dbReference>
<dbReference type="Gene3D" id="3.30.300.20">
    <property type="match status" value="1"/>
</dbReference>
<dbReference type="HAMAP" id="MF_00003">
    <property type="entry name" value="RbfA"/>
    <property type="match status" value="1"/>
</dbReference>
<dbReference type="InterPro" id="IPR015946">
    <property type="entry name" value="KH_dom-like_a/b"/>
</dbReference>
<dbReference type="InterPro" id="IPR000238">
    <property type="entry name" value="RbfA"/>
</dbReference>
<dbReference type="InterPro" id="IPR023799">
    <property type="entry name" value="RbfA_dom_sf"/>
</dbReference>
<dbReference type="InterPro" id="IPR020053">
    <property type="entry name" value="Ribosome-bd_factorA_CS"/>
</dbReference>
<dbReference type="NCBIfam" id="TIGR00082">
    <property type="entry name" value="rbfA"/>
    <property type="match status" value="1"/>
</dbReference>
<dbReference type="PANTHER" id="PTHR33515">
    <property type="entry name" value="RIBOSOME-BINDING FACTOR A, CHLOROPLASTIC-RELATED"/>
    <property type="match status" value="1"/>
</dbReference>
<dbReference type="PANTHER" id="PTHR33515:SF1">
    <property type="entry name" value="RIBOSOME-BINDING FACTOR A, CHLOROPLASTIC-RELATED"/>
    <property type="match status" value="1"/>
</dbReference>
<dbReference type="Pfam" id="PF02033">
    <property type="entry name" value="RBFA"/>
    <property type="match status" value="1"/>
</dbReference>
<dbReference type="SUPFAM" id="SSF89919">
    <property type="entry name" value="Ribosome-binding factor A, RbfA"/>
    <property type="match status" value="1"/>
</dbReference>
<dbReference type="PROSITE" id="PS01319">
    <property type="entry name" value="RBFA"/>
    <property type="match status" value="1"/>
</dbReference>
<comment type="function">
    <text evidence="1">One of several proteins that assist in the late maturation steps of the functional core of the 30S ribosomal subunit. Associates with free 30S ribosomal subunits (but not with 30S subunits that are part of 70S ribosomes or polysomes). Required for efficient processing of 16S rRNA. May interact with the 5'-terminal helix region of 16S rRNA.</text>
</comment>
<comment type="subunit">
    <text evidence="1">Monomer. Binds 30S ribosomal subunits, but not 50S ribosomal subunits or 70S ribosomes.</text>
</comment>
<comment type="subcellular location">
    <subcellularLocation>
        <location evidence="1">Cytoplasm</location>
    </subcellularLocation>
</comment>
<comment type="similarity">
    <text evidence="1">Belongs to the RbfA family.</text>
</comment>
<accession>Q0A798</accession>
<keyword id="KW-0963">Cytoplasm</keyword>
<keyword id="KW-1185">Reference proteome</keyword>
<keyword id="KW-0690">Ribosome biogenesis</keyword>
<evidence type="ECO:0000255" key="1">
    <source>
        <dbReference type="HAMAP-Rule" id="MF_00003"/>
    </source>
</evidence>
<organism>
    <name type="scientific">Alkalilimnicola ehrlichii (strain ATCC BAA-1101 / DSM 17681 / MLHE-1)</name>
    <dbReference type="NCBI Taxonomy" id="187272"/>
    <lineage>
        <taxon>Bacteria</taxon>
        <taxon>Pseudomonadati</taxon>
        <taxon>Pseudomonadota</taxon>
        <taxon>Gammaproteobacteria</taxon>
        <taxon>Chromatiales</taxon>
        <taxon>Ectothiorhodospiraceae</taxon>
        <taxon>Alkalilimnicola</taxon>
    </lineage>
</organism>